<comment type="function">
    <text evidence="1">Usually encoded in the trnK tRNA gene intron. Probably assists in splicing its own and other chloroplast group II introns.</text>
</comment>
<comment type="subcellular location">
    <subcellularLocation>
        <location>Plastid</location>
        <location>Chloroplast</location>
    </subcellularLocation>
</comment>
<comment type="similarity">
    <text evidence="1">Belongs to the intron maturase 2 family. MatK subfamily.</text>
</comment>
<keyword id="KW-0150">Chloroplast</keyword>
<keyword id="KW-0507">mRNA processing</keyword>
<keyword id="KW-0934">Plastid</keyword>
<keyword id="KW-0694">RNA-binding</keyword>
<keyword id="KW-0819">tRNA processing</keyword>
<evidence type="ECO:0000255" key="1">
    <source>
        <dbReference type="HAMAP-Rule" id="MF_01390"/>
    </source>
</evidence>
<name>MATK_GOSBA</name>
<geneLocation type="chloroplast"/>
<organism>
    <name type="scientific">Gossypium barbadense</name>
    <name type="common">Sea Island cotton</name>
    <name type="synonym">Hibiscus barbadensis</name>
    <dbReference type="NCBI Taxonomy" id="3634"/>
    <lineage>
        <taxon>Eukaryota</taxon>
        <taxon>Viridiplantae</taxon>
        <taxon>Streptophyta</taxon>
        <taxon>Embryophyta</taxon>
        <taxon>Tracheophyta</taxon>
        <taxon>Spermatophyta</taxon>
        <taxon>Magnoliopsida</taxon>
        <taxon>eudicotyledons</taxon>
        <taxon>Gunneridae</taxon>
        <taxon>Pentapetalae</taxon>
        <taxon>rosids</taxon>
        <taxon>malvids</taxon>
        <taxon>Malvales</taxon>
        <taxon>Malvaceae</taxon>
        <taxon>Malvoideae</taxon>
        <taxon>Gossypium</taxon>
    </lineage>
</organism>
<proteinExistence type="inferred from homology"/>
<sequence>MEEFQVYLELNRSRRHDFLYPLIFREYIYALAHEHGLNKSMIFFENQGYGNKFSSLIVKRLILRMDQQNRLISSANDSNQNPVFGHNNNLYSQMIAVGFAVIVEIPFSLRLISYSQGAEVAKSHNLQSIHSIFPFLEDKFSHLNYVLEALIPHPIHLEILVQALRYWVKDASSLHLLRFSLYEYCNLKSFITPKKSISIFNPRLFLFLYNSHTCEYESIFLFLRNQSSHLRSTSSGVFLERIFFYGKIKYLGEVFYNDFQNNLWLFKDPFIHFIRYQGKSILSSKDTSLLINKWKYYFVDLWQYYFYLWSQSGRVRINQLSKYSLDFLGYLSSVRLNPSVVRSQVLENSFLIDNAVKTLDTRIPIISLIGSLSKAKFCNTLGHPISKPTWADSPDSDIIDRFVRISRNLSHYHSGSSKKKSLYRIKYILRFSCVKTLARKHKSTVRAFLKKLGSEFLEEFFTETEEEHVISLIFPRGFFAMRKVYRGRIWYLDIICINALVNHS</sequence>
<gene>
    <name evidence="1" type="primary">matK</name>
</gene>
<accession>A0ZZ16</accession>
<dbReference type="EMBL" id="AP009123">
    <property type="protein sequence ID" value="BAF41228.1"/>
    <property type="molecule type" value="Genomic_DNA"/>
</dbReference>
<dbReference type="RefSeq" id="YP_913168.1">
    <property type="nucleotide sequence ID" value="NC_008641.1"/>
</dbReference>
<dbReference type="GeneID" id="4575192"/>
<dbReference type="GO" id="GO:0009507">
    <property type="term" value="C:chloroplast"/>
    <property type="evidence" value="ECO:0007669"/>
    <property type="project" value="UniProtKB-SubCell"/>
</dbReference>
<dbReference type="GO" id="GO:0003723">
    <property type="term" value="F:RNA binding"/>
    <property type="evidence" value="ECO:0007669"/>
    <property type="project" value="UniProtKB-KW"/>
</dbReference>
<dbReference type="GO" id="GO:0006397">
    <property type="term" value="P:mRNA processing"/>
    <property type="evidence" value="ECO:0007669"/>
    <property type="project" value="UniProtKB-KW"/>
</dbReference>
<dbReference type="GO" id="GO:0008380">
    <property type="term" value="P:RNA splicing"/>
    <property type="evidence" value="ECO:0007669"/>
    <property type="project" value="UniProtKB-UniRule"/>
</dbReference>
<dbReference type="GO" id="GO:0008033">
    <property type="term" value="P:tRNA processing"/>
    <property type="evidence" value="ECO:0007669"/>
    <property type="project" value="UniProtKB-KW"/>
</dbReference>
<dbReference type="HAMAP" id="MF_01390">
    <property type="entry name" value="MatK"/>
    <property type="match status" value="1"/>
</dbReference>
<dbReference type="InterPro" id="IPR024937">
    <property type="entry name" value="Domain_X"/>
</dbReference>
<dbReference type="InterPro" id="IPR002866">
    <property type="entry name" value="Maturase_MatK"/>
</dbReference>
<dbReference type="InterPro" id="IPR024942">
    <property type="entry name" value="Maturase_MatK_N"/>
</dbReference>
<dbReference type="PANTHER" id="PTHR34811">
    <property type="entry name" value="MATURASE K"/>
    <property type="match status" value="1"/>
</dbReference>
<dbReference type="PANTHER" id="PTHR34811:SF1">
    <property type="entry name" value="MATURASE K"/>
    <property type="match status" value="1"/>
</dbReference>
<dbReference type="Pfam" id="PF01348">
    <property type="entry name" value="Intron_maturas2"/>
    <property type="match status" value="1"/>
</dbReference>
<dbReference type="Pfam" id="PF01824">
    <property type="entry name" value="MatK_N"/>
    <property type="match status" value="1"/>
</dbReference>
<reference key="1">
    <citation type="journal article" date="2006" name="Genes Genet. Syst.">
        <title>Complete nucleotide sequence of the cotton (Gossypium barbadense L.) chloroplast genome with a comparative analysis of sequences among 9 dicot plants.</title>
        <authorList>
            <person name="Ibrahim R.I.H."/>
            <person name="Azuma J."/>
            <person name="Sakamoto M."/>
        </authorList>
    </citation>
    <scope>NUCLEOTIDE SEQUENCE [LARGE SCALE GENOMIC DNA]</scope>
</reference>
<feature type="chain" id="PRO_0000355936" description="Maturase K">
    <location>
        <begin position="1"/>
        <end position="504"/>
    </location>
</feature>
<protein>
    <recommendedName>
        <fullName evidence="1">Maturase K</fullName>
    </recommendedName>
    <alternativeName>
        <fullName evidence="1">Intron maturase</fullName>
    </alternativeName>
</protein>